<protein>
    <recommendedName>
        <fullName>Putative peptidyl-prolyl cis-trans isomerase NifM</fullName>
        <shortName>PPIase NifM</shortName>
        <ecNumber>5.2.1.8</ecNumber>
    </recommendedName>
    <alternativeName>
        <fullName>Rotamase NifM</fullName>
    </alternativeName>
</protein>
<gene>
    <name type="primary">nifM</name>
</gene>
<feature type="chain" id="PRO_0000193430" description="Putative peptidyl-prolyl cis-trans isomerase NifM">
    <location>
        <begin position="1"/>
        <end position="266"/>
    </location>
</feature>
<feature type="domain" description="PpiC" evidence="1">
    <location>
        <begin position="124"/>
        <end position="221"/>
    </location>
</feature>
<comment type="function">
    <text>Required for the activation and stabilization of the iron-component (NifH) of nitrogenase. Probable PPIase.</text>
</comment>
<comment type="catalytic activity">
    <reaction>
        <text>[protein]-peptidylproline (omega=180) = [protein]-peptidylproline (omega=0)</text>
        <dbReference type="Rhea" id="RHEA:16237"/>
        <dbReference type="Rhea" id="RHEA-COMP:10747"/>
        <dbReference type="Rhea" id="RHEA-COMP:10748"/>
        <dbReference type="ChEBI" id="CHEBI:83833"/>
        <dbReference type="ChEBI" id="CHEBI:83834"/>
        <dbReference type="EC" id="5.2.1.8"/>
    </reaction>
</comment>
<comment type="similarity">
    <text evidence="2">Belongs to the PpiC/parvulin rotamase family.</text>
</comment>
<evidence type="ECO:0000255" key="1">
    <source>
        <dbReference type="PROSITE-ProRule" id="PRU00278"/>
    </source>
</evidence>
<evidence type="ECO:0000305" key="2"/>
<proteinExistence type="inferred from homology"/>
<keyword id="KW-0413">Isomerase</keyword>
<keyword id="KW-0535">Nitrogen fixation</keyword>
<keyword id="KW-0697">Rotamase</keyword>
<sequence>MNPWQRFARQRLARSRWNRDPAALDPADTPAFEQAWQRQCHMEQTIVARVPEGDIPAALLENIAASLAIWLDEGDFAPPERAAIVRHHARLELAFADIARQAPQPDLSTVQAWYLRHQTQFMRPEQRLTRHLLLTVDNDREAVHQRILGLYRQINASRDAFAPLAQRHSHCPSALEEGRLGWISRGLLYPQLETALFSLAENALSLPIASELGWHLLWCEAIRPAAPMEPQQALESARDYLWQQSQQRHQRQWLEQMISRQPGLCG</sequence>
<reference key="1">
    <citation type="journal article" date="1988" name="J. Mol. Biol.">
        <title>Nucleotide sequence of a 24,206-base-pair DNA fragment carrying the entire nitrogen fixation gene cluster of Klebsiella pneumoniae.</title>
        <authorList>
            <person name="Arnold W."/>
            <person name="Rump A."/>
            <person name="Klipp W."/>
            <person name="Priefer U.B."/>
            <person name="Puehler A."/>
        </authorList>
    </citation>
    <scope>NUCLEOTIDE SEQUENCE [GENOMIC DNA]</scope>
</reference>
<reference key="2">
    <citation type="submission" date="1989-07" db="EMBL/GenBank/DDBJ databases">
        <authorList>
            <person name="Collet T.A."/>
            <person name="White T."/>
            <person name="Howard K."/>
            <person name="Orme-Johnson W.H."/>
        </authorList>
    </citation>
    <scope>NUCLEOTIDE SEQUENCE [GENOMIC DNA]</scope>
    <source>
        <strain>UN</strain>
    </source>
</reference>
<dbReference type="EC" id="5.2.1.8"/>
<dbReference type="EMBL" id="X13303">
    <property type="protein sequence ID" value="CAA31679.1"/>
    <property type="molecule type" value="Genomic_DNA"/>
</dbReference>
<dbReference type="EMBL" id="M24106">
    <property type="protein sequence ID" value="AAA25105.1"/>
    <property type="molecule type" value="Genomic_DNA"/>
</dbReference>
<dbReference type="PIR" id="S02510">
    <property type="entry name" value="S02510"/>
</dbReference>
<dbReference type="SMR" id="P0A3Y9"/>
<dbReference type="GO" id="GO:0003755">
    <property type="term" value="F:peptidyl-prolyl cis-trans isomerase activity"/>
    <property type="evidence" value="ECO:0007669"/>
    <property type="project" value="UniProtKB-KW"/>
</dbReference>
<dbReference type="GO" id="GO:0009399">
    <property type="term" value="P:nitrogen fixation"/>
    <property type="evidence" value="ECO:0007669"/>
    <property type="project" value="UniProtKB-KW"/>
</dbReference>
<dbReference type="Gene3D" id="3.10.50.40">
    <property type="match status" value="1"/>
</dbReference>
<dbReference type="InterPro" id="IPR014282">
    <property type="entry name" value="Nitrogen_fix_NifM"/>
</dbReference>
<dbReference type="InterPro" id="IPR046357">
    <property type="entry name" value="PPIase_dom_sf"/>
</dbReference>
<dbReference type="InterPro" id="IPR000297">
    <property type="entry name" value="PPIase_PpiC"/>
</dbReference>
<dbReference type="InterPro" id="IPR023058">
    <property type="entry name" value="PPIase_PpiC_CS"/>
</dbReference>
<dbReference type="InterPro" id="IPR050245">
    <property type="entry name" value="PrsA_foldase"/>
</dbReference>
<dbReference type="NCBIfam" id="TIGR02933">
    <property type="entry name" value="nifM_nitrog"/>
    <property type="match status" value="1"/>
</dbReference>
<dbReference type="PANTHER" id="PTHR47245:SF2">
    <property type="entry name" value="PEPTIDYL-PROLYL CIS-TRANS ISOMERASE HP_0175-RELATED"/>
    <property type="match status" value="1"/>
</dbReference>
<dbReference type="PANTHER" id="PTHR47245">
    <property type="entry name" value="PEPTIDYLPROLYL ISOMERASE"/>
    <property type="match status" value="1"/>
</dbReference>
<dbReference type="Pfam" id="PF00639">
    <property type="entry name" value="Rotamase"/>
    <property type="match status" value="1"/>
</dbReference>
<dbReference type="SUPFAM" id="SSF54534">
    <property type="entry name" value="FKBP-like"/>
    <property type="match status" value="1"/>
</dbReference>
<dbReference type="PROSITE" id="PS01096">
    <property type="entry name" value="PPIC_PPIASE_1"/>
    <property type="match status" value="1"/>
</dbReference>
<dbReference type="PROSITE" id="PS50198">
    <property type="entry name" value="PPIC_PPIASE_2"/>
    <property type="match status" value="1"/>
</dbReference>
<name>NIFM_KLEPN</name>
<organism>
    <name type="scientific">Klebsiella pneumoniae</name>
    <dbReference type="NCBI Taxonomy" id="573"/>
    <lineage>
        <taxon>Bacteria</taxon>
        <taxon>Pseudomonadati</taxon>
        <taxon>Pseudomonadota</taxon>
        <taxon>Gammaproteobacteria</taxon>
        <taxon>Enterobacterales</taxon>
        <taxon>Enterobacteriaceae</taxon>
        <taxon>Klebsiella/Raoultella group</taxon>
        <taxon>Klebsiella</taxon>
        <taxon>Klebsiella pneumoniae complex</taxon>
    </lineage>
</organism>
<accession>P0A3Y9</accession>
<accession>P08534</accession>